<organism>
    <name type="scientific">Clostridium botulinum (strain Loch Maree / Type A3)</name>
    <dbReference type="NCBI Taxonomy" id="498214"/>
    <lineage>
        <taxon>Bacteria</taxon>
        <taxon>Bacillati</taxon>
        <taxon>Bacillota</taxon>
        <taxon>Clostridia</taxon>
        <taxon>Eubacteriales</taxon>
        <taxon>Clostridiaceae</taxon>
        <taxon>Clostridium</taxon>
    </lineage>
</organism>
<keyword id="KW-0227">DNA damage</keyword>
<keyword id="KW-0234">DNA repair</keyword>
<keyword id="KW-0378">Hydrolase</keyword>
<sequence>MRLTRDFYAKDARVLAKELLGKVLVREVDGIKLKGKIVETEAYIGAIDKASHAYGGRRTKRTEPLYGKPGIAYVYFIYGKYFCFNIISKTEGEAEGVLIRALEPLENINLISKLRFNKEFEELNNYQRKNITSGPSKLCMAFNINRDNNWEDLCESSSLYVEDVLYNDFEIIETVRVGIDYAEEARDFLWRYYIKDNAFVSVK</sequence>
<gene>
    <name type="ordered locus">CLK_0705</name>
</gene>
<evidence type="ECO:0000255" key="1">
    <source>
        <dbReference type="HAMAP-Rule" id="MF_00527"/>
    </source>
</evidence>
<dbReference type="EC" id="3.2.2.-" evidence="1"/>
<dbReference type="EMBL" id="CP000962">
    <property type="protein sequence ID" value="ACA54217.1"/>
    <property type="molecule type" value="Genomic_DNA"/>
</dbReference>
<dbReference type="RefSeq" id="WP_012342349.1">
    <property type="nucleotide sequence ID" value="NC_010520.1"/>
</dbReference>
<dbReference type="SMR" id="B1KZY0"/>
<dbReference type="KEGG" id="cbl:CLK_0705"/>
<dbReference type="HOGENOM" id="CLU_060471_0_2_9"/>
<dbReference type="GO" id="GO:0003905">
    <property type="term" value="F:alkylbase DNA N-glycosylase activity"/>
    <property type="evidence" value="ECO:0007669"/>
    <property type="project" value="InterPro"/>
</dbReference>
<dbReference type="GO" id="GO:0003677">
    <property type="term" value="F:DNA binding"/>
    <property type="evidence" value="ECO:0007669"/>
    <property type="project" value="InterPro"/>
</dbReference>
<dbReference type="GO" id="GO:0006284">
    <property type="term" value="P:base-excision repair"/>
    <property type="evidence" value="ECO:0007669"/>
    <property type="project" value="InterPro"/>
</dbReference>
<dbReference type="CDD" id="cd00540">
    <property type="entry name" value="AAG"/>
    <property type="match status" value="1"/>
</dbReference>
<dbReference type="FunFam" id="3.10.300.10:FF:000001">
    <property type="entry name" value="Putative 3-methyladenine DNA glycosylase"/>
    <property type="match status" value="1"/>
</dbReference>
<dbReference type="Gene3D" id="3.10.300.10">
    <property type="entry name" value="Methylpurine-DNA glycosylase (MPG)"/>
    <property type="match status" value="1"/>
</dbReference>
<dbReference type="HAMAP" id="MF_00527">
    <property type="entry name" value="3MGH"/>
    <property type="match status" value="1"/>
</dbReference>
<dbReference type="InterPro" id="IPR011034">
    <property type="entry name" value="Formyl_transferase-like_C_sf"/>
</dbReference>
<dbReference type="InterPro" id="IPR003180">
    <property type="entry name" value="MPG"/>
</dbReference>
<dbReference type="InterPro" id="IPR036995">
    <property type="entry name" value="MPG_sf"/>
</dbReference>
<dbReference type="NCBIfam" id="TIGR00567">
    <property type="entry name" value="3mg"/>
    <property type="match status" value="1"/>
</dbReference>
<dbReference type="NCBIfam" id="NF002001">
    <property type="entry name" value="PRK00802.1-1"/>
    <property type="match status" value="1"/>
</dbReference>
<dbReference type="PANTHER" id="PTHR10429">
    <property type="entry name" value="DNA-3-METHYLADENINE GLYCOSYLASE"/>
    <property type="match status" value="1"/>
</dbReference>
<dbReference type="PANTHER" id="PTHR10429:SF0">
    <property type="entry name" value="DNA-3-METHYLADENINE GLYCOSYLASE"/>
    <property type="match status" value="1"/>
</dbReference>
<dbReference type="Pfam" id="PF02245">
    <property type="entry name" value="Pur_DNA_glyco"/>
    <property type="match status" value="1"/>
</dbReference>
<dbReference type="SUPFAM" id="SSF50486">
    <property type="entry name" value="FMT C-terminal domain-like"/>
    <property type="match status" value="1"/>
</dbReference>
<reference key="1">
    <citation type="journal article" date="2007" name="PLoS ONE">
        <title>Analysis of the neurotoxin complex genes in Clostridium botulinum A1-A4 and B1 strains: BoNT/A3, /Ba4 and /B1 clusters are located within plasmids.</title>
        <authorList>
            <person name="Smith T.J."/>
            <person name="Hill K.K."/>
            <person name="Foley B.T."/>
            <person name="Detter J.C."/>
            <person name="Munk A.C."/>
            <person name="Bruce D.C."/>
            <person name="Doggett N.A."/>
            <person name="Smith L.A."/>
            <person name="Marks J.D."/>
            <person name="Xie G."/>
            <person name="Brettin T.S."/>
        </authorList>
    </citation>
    <scope>NUCLEOTIDE SEQUENCE [LARGE SCALE GENOMIC DNA]</scope>
    <source>
        <strain>Loch Maree / Type A3</strain>
    </source>
</reference>
<feature type="chain" id="PRO_1000127759" description="Putative 3-methyladenine DNA glycosylase">
    <location>
        <begin position="1"/>
        <end position="203"/>
    </location>
</feature>
<name>3MGH_CLOBM</name>
<protein>
    <recommendedName>
        <fullName evidence="1">Putative 3-methyladenine DNA glycosylase</fullName>
        <ecNumber evidence="1">3.2.2.-</ecNumber>
    </recommendedName>
</protein>
<accession>B1KZY0</accession>
<proteinExistence type="inferred from homology"/>
<comment type="similarity">
    <text evidence="1">Belongs to the DNA glycosylase MPG family.</text>
</comment>